<gene>
    <name type="primary">ROGDI</name>
</gene>
<proteinExistence type="evidence at transcript level"/>
<evidence type="ECO:0000250" key="1">
    <source>
        <dbReference type="UniProtKB" id="Q4V7D2"/>
    </source>
</evidence>
<evidence type="ECO:0000250" key="2">
    <source>
        <dbReference type="UniProtKB" id="Q9GZN7"/>
    </source>
</evidence>
<evidence type="ECO:0000305" key="3"/>
<keyword id="KW-0007">Acetylation</keyword>
<keyword id="KW-0966">Cell projection</keyword>
<keyword id="KW-0968">Cytoplasmic vesicle</keyword>
<keyword id="KW-0539">Nucleus</keyword>
<keyword id="KW-1185">Reference proteome</keyword>
<keyword id="KW-0770">Synapse</keyword>
<feature type="initiator methionine" description="Removed" evidence="2">
    <location>
        <position position="1"/>
    </location>
</feature>
<feature type="chain" id="PRO_0000315666" description="Protein rogdi homolog">
    <location>
        <begin position="2"/>
        <end position="287"/>
    </location>
</feature>
<feature type="modified residue" description="N-acetylalanine" evidence="2">
    <location>
        <position position="2"/>
    </location>
</feature>
<organism>
    <name type="scientific">Pongo abelii</name>
    <name type="common">Sumatran orangutan</name>
    <name type="synonym">Pongo pygmaeus abelii</name>
    <dbReference type="NCBI Taxonomy" id="9601"/>
    <lineage>
        <taxon>Eukaryota</taxon>
        <taxon>Metazoa</taxon>
        <taxon>Chordata</taxon>
        <taxon>Craniata</taxon>
        <taxon>Vertebrata</taxon>
        <taxon>Euteleostomi</taxon>
        <taxon>Mammalia</taxon>
        <taxon>Eutheria</taxon>
        <taxon>Euarchontoglires</taxon>
        <taxon>Primates</taxon>
        <taxon>Haplorrhini</taxon>
        <taxon>Catarrhini</taxon>
        <taxon>Hominidae</taxon>
        <taxon>Pongo</taxon>
    </lineage>
</organism>
<protein>
    <recommendedName>
        <fullName>Protein rogdi homolog</fullName>
    </recommendedName>
</protein>
<dbReference type="EMBL" id="CR859988">
    <property type="protein sequence ID" value="CAH92139.1"/>
    <property type="molecule type" value="mRNA"/>
</dbReference>
<dbReference type="RefSeq" id="NP_001129005.1">
    <property type="nucleotide sequence ID" value="NM_001135533.1"/>
</dbReference>
<dbReference type="SMR" id="Q5R7X1"/>
<dbReference type="FunCoup" id="Q5R7X1">
    <property type="interactions" value="816"/>
</dbReference>
<dbReference type="STRING" id="9601.ENSPPYP00000007996"/>
<dbReference type="Ensembl" id="ENSPPYT00000008327.3">
    <property type="protein sequence ID" value="ENSPPYP00000007996.2"/>
    <property type="gene ID" value="ENSPPYG00000007071.3"/>
</dbReference>
<dbReference type="GeneID" id="100190845"/>
<dbReference type="KEGG" id="pon:100190845"/>
<dbReference type="CTD" id="79641"/>
<dbReference type="eggNOG" id="KOG3992">
    <property type="taxonomic scope" value="Eukaryota"/>
</dbReference>
<dbReference type="GeneTree" id="ENSGT00390000007164"/>
<dbReference type="HOGENOM" id="CLU_062094_0_1_1"/>
<dbReference type="InParanoid" id="Q5R7X1"/>
<dbReference type="OMA" id="NILMECA"/>
<dbReference type="OrthoDB" id="66510at2759"/>
<dbReference type="TreeFam" id="TF105859"/>
<dbReference type="Proteomes" id="UP000001595">
    <property type="component" value="Chromosome 16"/>
</dbReference>
<dbReference type="GO" id="GO:0030424">
    <property type="term" value="C:axon"/>
    <property type="evidence" value="ECO:0007669"/>
    <property type="project" value="UniProtKB-SubCell"/>
</dbReference>
<dbReference type="GO" id="GO:0030425">
    <property type="term" value="C:dendrite"/>
    <property type="evidence" value="ECO:0007669"/>
    <property type="project" value="UniProtKB-SubCell"/>
</dbReference>
<dbReference type="GO" id="GO:0005635">
    <property type="term" value="C:nuclear envelope"/>
    <property type="evidence" value="ECO:0007669"/>
    <property type="project" value="UniProtKB-SubCell"/>
</dbReference>
<dbReference type="GO" id="GO:0043204">
    <property type="term" value="C:perikaryon"/>
    <property type="evidence" value="ECO:0007669"/>
    <property type="project" value="UniProtKB-SubCell"/>
</dbReference>
<dbReference type="GO" id="GO:0043291">
    <property type="term" value="C:RAVE complex"/>
    <property type="evidence" value="ECO:0007669"/>
    <property type="project" value="TreeGrafter"/>
</dbReference>
<dbReference type="GO" id="GO:0008021">
    <property type="term" value="C:synaptic vesicle"/>
    <property type="evidence" value="ECO:0007669"/>
    <property type="project" value="UniProtKB-SubCell"/>
</dbReference>
<dbReference type="GO" id="GO:0030282">
    <property type="term" value="P:bone mineralization"/>
    <property type="evidence" value="ECO:0007669"/>
    <property type="project" value="Ensembl"/>
</dbReference>
<dbReference type="GO" id="GO:0007420">
    <property type="term" value="P:brain development"/>
    <property type="evidence" value="ECO:0007669"/>
    <property type="project" value="Ensembl"/>
</dbReference>
<dbReference type="GO" id="GO:0070166">
    <property type="term" value="P:enamel mineralization"/>
    <property type="evidence" value="ECO:0007669"/>
    <property type="project" value="Ensembl"/>
</dbReference>
<dbReference type="GO" id="GO:0010467">
    <property type="term" value="P:gene expression"/>
    <property type="evidence" value="ECO:0007669"/>
    <property type="project" value="Ensembl"/>
</dbReference>
<dbReference type="GO" id="GO:0030097">
    <property type="term" value="P:hemopoiesis"/>
    <property type="evidence" value="ECO:0007669"/>
    <property type="project" value="Ensembl"/>
</dbReference>
<dbReference type="GO" id="GO:0040011">
    <property type="term" value="P:locomotion"/>
    <property type="evidence" value="ECO:0007669"/>
    <property type="project" value="Ensembl"/>
</dbReference>
<dbReference type="GO" id="GO:0045475">
    <property type="term" value="P:locomotor rhythm"/>
    <property type="evidence" value="ECO:0007669"/>
    <property type="project" value="Ensembl"/>
</dbReference>
<dbReference type="GO" id="GO:0007613">
    <property type="term" value="P:memory"/>
    <property type="evidence" value="ECO:0007669"/>
    <property type="project" value="Ensembl"/>
</dbReference>
<dbReference type="GO" id="GO:0022008">
    <property type="term" value="P:neurogenesis"/>
    <property type="evidence" value="ECO:0007669"/>
    <property type="project" value="Ensembl"/>
</dbReference>
<dbReference type="GO" id="GO:0050905">
    <property type="term" value="P:neuromuscular process"/>
    <property type="evidence" value="ECO:0007669"/>
    <property type="project" value="Ensembl"/>
</dbReference>
<dbReference type="GO" id="GO:0045851">
    <property type="term" value="P:pH reduction"/>
    <property type="evidence" value="ECO:0007669"/>
    <property type="project" value="Ensembl"/>
</dbReference>
<dbReference type="GO" id="GO:0008284">
    <property type="term" value="P:positive regulation of cell population proliferation"/>
    <property type="evidence" value="ECO:0007669"/>
    <property type="project" value="Ensembl"/>
</dbReference>
<dbReference type="GO" id="GO:0009410">
    <property type="term" value="P:response to xenobiotic stimulus"/>
    <property type="evidence" value="ECO:0007669"/>
    <property type="project" value="Ensembl"/>
</dbReference>
<dbReference type="InterPro" id="IPR028241">
    <property type="entry name" value="RAVE2/Rogdi"/>
</dbReference>
<dbReference type="PANTHER" id="PTHR13618">
    <property type="entry name" value="LEUCINE ZIPPER CONTAINING TRANSCRIPTION FACTOR LZF1"/>
    <property type="match status" value="1"/>
</dbReference>
<dbReference type="PANTHER" id="PTHR13618:SF1">
    <property type="entry name" value="PROTEIN ROGDI HOMOLOG"/>
    <property type="match status" value="1"/>
</dbReference>
<dbReference type="Pfam" id="PF10259">
    <property type="entry name" value="Rogdi_lz"/>
    <property type="match status" value="1"/>
</dbReference>
<reference key="1">
    <citation type="submission" date="2004-11" db="EMBL/GenBank/DDBJ databases">
        <authorList>
            <consortium name="The German cDNA consortium"/>
        </authorList>
    </citation>
    <scope>NUCLEOTIDE SEQUENCE [LARGE SCALE MRNA]</scope>
    <source>
        <tissue>Brain cortex</tissue>
    </source>
</reference>
<sequence>MATVMAATAAERAVLEEEFRWLLHDEVHAVLKQLQDILKEASLRFTLPGSGTEGPAKQENFILGSCGTDQVKGVLTLQGDALSQADVNLKMPRNNQLLHFTFREDKQWKLQQIQDARNHVSQAIYLLISRDESYQFKTGAEVLKLMDAVMLQLTRARNRLTTPATLTLPEIAASGLTRMFAPALPSDLLVNVYINLNKLCLTVYQLHALQPNSTKNFRPAGGAVLHSPGAMFEWGSQRLEVSHVHKVECVIPWLNDALVYFTVSLQLCQQLKDKISVFSSYWSYRPF</sequence>
<name>ROGDI_PONAB</name>
<comment type="subunit">
    <text evidence="2">Monomer.</text>
</comment>
<comment type="subcellular location">
    <subcellularLocation>
        <location evidence="2">Nucleus envelope</location>
    </subcellularLocation>
    <subcellularLocation>
        <location evidence="1">Presynapse</location>
    </subcellularLocation>
    <subcellularLocation>
        <location evidence="1">Cell projection</location>
        <location evidence="1">Axon</location>
    </subcellularLocation>
    <subcellularLocation>
        <location evidence="1">Perikaryon</location>
    </subcellularLocation>
    <subcellularLocation>
        <location evidence="1">Cell projection</location>
        <location evidence="1">Dendrite</location>
    </subcellularLocation>
    <subcellularLocation>
        <location evidence="1">Cytoplasmic vesicle</location>
        <location evidence="1">Secretory vesicle</location>
        <location evidence="1">Synaptic vesicle</location>
    </subcellularLocation>
    <text evidence="1">Detected primarily at presynaptic sites on axons, and to a lesser degree in soma and dendrites. Not detected at post-synaptic sites.</text>
</comment>
<comment type="similarity">
    <text evidence="3">Belongs to the rogdi family.</text>
</comment>
<accession>Q5R7X1</accession>